<name>TEPR1_ANOGA</name>
<gene>
    <name evidence="12" type="primary">TEP1</name>
</gene>
<evidence type="ECO:0000250" key="1">
    <source>
        <dbReference type="UniProtKB" id="C9XI63"/>
    </source>
</evidence>
<evidence type="ECO:0000250" key="2">
    <source>
        <dbReference type="UniProtKB" id="Q9GYW4"/>
    </source>
</evidence>
<evidence type="ECO:0000255" key="3"/>
<evidence type="ECO:0000255" key="4">
    <source>
        <dbReference type="PROSITE-ProRule" id="PRU00498"/>
    </source>
</evidence>
<evidence type="ECO:0000269" key="5">
    <source>
    </source>
</evidence>
<evidence type="ECO:0000269" key="6">
    <source>
    </source>
</evidence>
<evidence type="ECO:0000269" key="7">
    <source>
    </source>
</evidence>
<evidence type="ECO:0000269" key="8">
    <source>
    </source>
</evidence>
<evidence type="ECO:0000269" key="9">
    <source>
    </source>
</evidence>
<evidence type="ECO:0000269" key="10">
    <source>
    </source>
</evidence>
<evidence type="ECO:0000303" key="11">
    <source>
    </source>
</evidence>
<evidence type="ECO:0000303" key="12">
    <source>
    </source>
</evidence>
<evidence type="ECO:0000305" key="13"/>
<evidence type="ECO:0000312" key="14">
    <source>
        <dbReference type="EMBL" id="CBA02654.1"/>
    </source>
</evidence>
<evidence type="ECO:0007744" key="15">
    <source>
        <dbReference type="PDB" id="2PN5"/>
    </source>
</evidence>
<evidence type="ECO:0007744" key="16">
    <source>
        <dbReference type="PDB" id="4D94"/>
    </source>
</evidence>
<evidence type="ECO:0007829" key="17">
    <source>
        <dbReference type="PDB" id="2PN5"/>
    </source>
</evidence>
<evidence type="ECO:0007829" key="18">
    <source>
        <dbReference type="PDB" id="4D94"/>
    </source>
</evidence>
<proteinExistence type="evidence at protein level"/>
<feature type="signal peptide" evidence="3">
    <location>
        <begin position="1"/>
        <end position="21"/>
    </location>
</feature>
<feature type="chain" id="PRO_0000455719" description="Thioester-containing protein 1 allele R1" evidence="3">
    <location>
        <begin position="22"/>
        <end position="1338"/>
    </location>
</feature>
<feature type="chain" id="PRO_0000455720" description="Thioester-containing protein 1 N-terminal" evidence="11">
    <location>
        <begin position="22"/>
        <end status="unknown"/>
    </location>
</feature>
<feature type="chain" id="PRO_0000455721" description="Thioester-containing protein 1 C-terminal" evidence="11">
    <location>
        <begin status="unknown"/>
        <end position="1338"/>
    </location>
</feature>
<feature type="region of interest" description="May contain the cleavage site" evidence="7">
    <location>
        <begin position="580"/>
        <end position="609"/>
    </location>
</feature>
<feature type="glycosylation site" description="N-linked (GlcNAc...) asparagine" evidence="4">
    <location>
        <position position="68"/>
    </location>
</feature>
<feature type="glycosylation site" description="N-linked (GlcNAc...) asparagine" evidence="6 9 15 16">
    <location>
        <position position="199"/>
    </location>
</feature>
<feature type="glycosylation site" description="N-linked (GlcNAc...) asparagine" evidence="6 9 15 16">
    <location>
        <position position="242"/>
    </location>
</feature>
<feature type="glycosylation site" description="N-linked (GlcNAc...) asparagine" evidence="6 9 15 16">
    <location>
        <position position="312"/>
    </location>
</feature>
<feature type="glycosylation site" description="N-linked (GlcNAc...) asparagine" evidence="4">
    <location>
        <position position="481"/>
    </location>
</feature>
<feature type="glycosylation site" description="N-linked (GlcNAc...) asparagine" evidence="6 9 15 16">
    <location>
        <position position="637"/>
    </location>
</feature>
<feature type="glycosylation site" description="N-linked (GlcNAc...) asparagine" evidence="4">
    <location>
        <position position="728"/>
    </location>
</feature>
<feature type="glycosylation site" description="N-linked (GlcNAc...) asparagine" evidence="4">
    <location>
        <position position="813"/>
    </location>
</feature>
<feature type="glycosylation site" description="N-linked (GlcNAc...) asparagine" evidence="4">
    <location>
        <position position="919"/>
    </location>
</feature>
<feature type="glycosylation site" description="N-linked (GlcNAc...) asparagine" evidence="9 16">
    <location>
        <position position="1065"/>
    </location>
</feature>
<feature type="disulfide bond" evidence="6 9 15 16">
    <location>
        <begin position="1217"/>
        <end position="1283"/>
    </location>
</feature>
<feature type="disulfide bond" evidence="6 9 15 16">
    <location>
        <begin position="1326"/>
        <end position="1338"/>
    </location>
</feature>
<feature type="disulfide bond" evidence="6 9 15 16">
    <location>
        <begin position="1329"/>
        <end position="1334"/>
    </location>
</feature>
<feature type="cross-link" description="Isoglutamyl cysteine thioester (Cys-Gln)" evidence="6 9">
    <location>
        <begin position="859"/>
        <end position="862"/>
    </location>
</feature>
<feature type="mutagenesis site" description="In absence of LRIM1/APL1C, does not affect the rate of hydrolysis of the thioester bond in vitro." evidence="9">
    <original>N</original>
    <variation>D</variation>
    <location>
        <position position="312"/>
    </location>
</feature>
<feature type="mutagenesis site" description="In absence of LRIM1/APL1C, increases the rate of hydrolysis of the thioester bond in vitro." evidence="9">
    <original>C</original>
    <variation>A</variation>
    <location>
        <position position="859"/>
    </location>
</feature>
<feature type="strand" evidence="17">
    <location>
        <begin position="23"/>
        <end position="30"/>
    </location>
</feature>
<feature type="strand" evidence="17">
    <location>
        <begin position="32"/>
        <end position="42"/>
    </location>
</feature>
<feature type="strand" evidence="17">
    <location>
        <begin position="45"/>
        <end position="56"/>
    </location>
</feature>
<feature type="strand" evidence="17">
    <location>
        <begin position="69"/>
        <end position="76"/>
    </location>
</feature>
<feature type="strand" evidence="17">
    <location>
        <begin position="79"/>
        <end position="86"/>
    </location>
</feature>
<feature type="strand" evidence="17">
    <location>
        <begin position="96"/>
        <end position="105"/>
    </location>
</feature>
<feature type="strand" evidence="17">
    <location>
        <begin position="109"/>
        <end position="116"/>
    </location>
</feature>
<feature type="strand" evidence="17">
    <location>
        <begin position="120"/>
        <end position="128"/>
    </location>
</feature>
<feature type="strand" evidence="17">
    <location>
        <begin position="130"/>
        <end position="132"/>
    </location>
</feature>
<feature type="strand" evidence="17">
    <location>
        <begin position="137"/>
        <end position="146"/>
    </location>
</feature>
<feature type="strand" evidence="17">
    <location>
        <begin position="157"/>
        <end position="163"/>
    </location>
</feature>
<feature type="strand" evidence="17">
    <location>
        <begin position="169"/>
        <end position="177"/>
    </location>
</feature>
<feature type="strand" evidence="17">
    <location>
        <begin position="182"/>
        <end position="188"/>
    </location>
</feature>
<feature type="strand" evidence="17">
    <location>
        <begin position="196"/>
        <end position="204"/>
    </location>
</feature>
<feature type="strand" evidence="17">
    <location>
        <begin position="207"/>
        <end position="216"/>
    </location>
</feature>
<feature type="strand" evidence="17">
    <location>
        <begin position="224"/>
        <end position="232"/>
    </location>
</feature>
<feature type="helix" evidence="17">
    <location>
        <begin position="236"/>
        <end position="238"/>
    </location>
</feature>
<feature type="strand" evidence="17">
    <location>
        <begin position="240"/>
        <end position="252"/>
    </location>
</feature>
<feature type="strand" evidence="17">
    <location>
        <begin position="256"/>
        <end position="265"/>
    </location>
</feature>
<feature type="turn" evidence="17">
    <location>
        <begin position="266"/>
        <end position="269"/>
    </location>
</feature>
<feature type="strand" evidence="17">
    <location>
        <begin position="270"/>
        <end position="287"/>
    </location>
</feature>
<feature type="strand" evidence="17">
    <location>
        <begin position="294"/>
        <end position="308"/>
    </location>
</feature>
<feature type="turn" evidence="17">
    <location>
        <begin position="309"/>
        <end position="311"/>
    </location>
</feature>
<feature type="strand" evidence="17">
    <location>
        <begin position="314"/>
        <end position="327"/>
    </location>
</feature>
<feature type="strand" evidence="17">
    <location>
        <begin position="329"/>
        <end position="339"/>
    </location>
</feature>
<feature type="strand" evidence="17">
    <location>
        <begin position="345"/>
        <end position="352"/>
    </location>
</feature>
<feature type="strand" evidence="18">
    <location>
        <begin position="356"/>
        <end position="358"/>
    </location>
</feature>
<feature type="strand" evidence="17">
    <location>
        <begin position="363"/>
        <end position="368"/>
    </location>
</feature>
<feature type="helix" evidence="17">
    <location>
        <begin position="369"/>
        <end position="371"/>
    </location>
</feature>
<feature type="strand" evidence="17">
    <location>
        <begin position="373"/>
        <end position="378"/>
    </location>
</feature>
<feature type="strand" evidence="17">
    <location>
        <begin position="383"/>
        <end position="389"/>
    </location>
</feature>
<feature type="strand" evidence="17">
    <location>
        <begin position="397"/>
        <end position="403"/>
    </location>
</feature>
<feature type="strand" evidence="17">
    <location>
        <begin position="409"/>
        <end position="416"/>
    </location>
</feature>
<feature type="turn" evidence="17">
    <location>
        <begin position="419"/>
        <end position="421"/>
    </location>
</feature>
<feature type="strand" evidence="17">
    <location>
        <begin position="425"/>
        <end position="429"/>
    </location>
</feature>
<feature type="strand" evidence="17">
    <location>
        <begin position="437"/>
        <end position="450"/>
    </location>
</feature>
<feature type="strand" evidence="17">
    <location>
        <begin position="452"/>
        <end position="468"/>
    </location>
</feature>
<feature type="strand" evidence="17">
    <location>
        <begin position="471"/>
        <end position="481"/>
    </location>
</feature>
<feature type="helix" evidence="17">
    <location>
        <begin position="484"/>
        <end position="486"/>
    </location>
</feature>
<feature type="strand" evidence="17">
    <location>
        <begin position="488"/>
        <end position="498"/>
    </location>
</feature>
<feature type="strand" evidence="17">
    <location>
        <begin position="501"/>
        <end position="510"/>
    </location>
</feature>
<feature type="helix" evidence="17">
    <location>
        <begin position="512"/>
        <end position="514"/>
    </location>
</feature>
<feature type="strand" evidence="17">
    <location>
        <begin position="519"/>
        <end position="522"/>
    </location>
</feature>
<feature type="strand" evidence="17">
    <location>
        <begin position="531"/>
        <end position="539"/>
    </location>
</feature>
<feature type="strand" evidence="17">
    <location>
        <begin position="544"/>
        <end position="551"/>
    </location>
</feature>
<feature type="helix" evidence="17">
    <location>
        <begin position="552"/>
        <end position="557"/>
    </location>
</feature>
<feature type="helix" evidence="17">
    <location>
        <begin position="564"/>
        <end position="572"/>
    </location>
</feature>
<feature type="helix" evidence="17">
    <location>
        <begin position="585"/>
        <end position="589"/>
    </location>
</feature>
<feature type="strand" evidence="17">
    <location>
        <begin position="591"/>
        <end position="595"/>
    </location>
</feature>
<feature type="strand" evidence="17">
    <location>
        <begin position="637"/>
        <end position="639"/>
    </location>
</feature>
<feature type="turn" evidence="17">
    <location>
        <begin position="641"/>
        <end position="644"/>
    </location>
</feature>
<feature type="strand" evidence="17">
    <location>
        <begin position="645"/>
        <end position="651"/>
    </location>
</feature>
<feature type="strand" evidence="17">
    <location>
        <begin position="657"/>
        <end position="667"/>
    </location>
</feature>
<feature type="turn" evidence="17">
    <location>
        <begin position="668"/>
        <end position="670"/>
    </location>
</feature>
<feature type="strand" evidence="17">
    <location>
        <begin position="671"/>
        <end position="674"/>
    </location>
</feature>
<feature type="strand" evidence="17">
    <location>
        <begin position="679"/>
        <end position="683"/>
    </location>
</feature>
<feature type="strand" evidence="17">
    <location>
        <begin position="686"/>
        <end position="692"/>
    </location>
</feature>
<feature type="strand" evidence="17">
    <location>
        <begin position="695"/>
        <end position="698"/>
    </location>
</feature>
<feature type="strand" evidence="17">
    <location>
        <begin position="702"/>
        <end position="711"/>
    </location>
</feature>
<feature type="strand" evidence="17">
    <location>
        <begin position="713"/>
        <end position="715"/>
    </location>
</feature>
<feature type="strand" evidence="17">
    <location>
        <begin position="717"/>
        <end position="724"/>
    </location>
</feature>
<feature type="helix" evidence="17">
    <location>
        <begin position="726"/>
        <end position="728"/>
    </location>
</feature>
<feature type="strand" evidence="17">
    <location>
        <begin position="730"/>
        <end position="732"/>
    </location>
</feature>
<feature type="strand" evidence="17">
    <location>
        <begin position="741"/>
        <end position="748"/>
    </location>
</feature>
<feature type="strand" evidence="17">
    <location>
        <begin position="754"/>
        <end position="762"/>
    </location>
</feature>
<feature type="strand" evidence="17">
    <location>
        <begin position="764"/>
        <end position="777"/>
    </location>
</feature>
<feature type="strand" evidence="17">
    <location>
        <begin position="780"/>
        <end position="792"/>
    </location>
</feature>
<feature type="strand" evidence="17">
    <location>
        <begin position="800"/>
        <end position="819"/>
    </location>
</feature>
<feature type="strand" evidence="17">
    <location>
        <begin position="832"/>
        <end position="840"/>
    </location>
</feature>
<feature type="helix" evidence="17">
    <location>
        <begin position="843"/>
        <end position="847"/>
    </location>
</feature>
<feature type="turn" evidence="17">
    <location>
        <begin position="848"/>
        <end position="850"/>
    </location>
</feature>
<feature type="helix" evidence="17">
    <location>
        <begin position="862"/>
        <end position="866"/>
    </location>
</feature>
<feature type="helix" evidence="17">
    <location>
        <begin position="868"/>
        <end position="879"/>
    </location>
</feature>
<feature type="helix" evidence="17">
    <location>
        <begin position="885"/>
        <end position="902"/>
    </location>
</feature>
<feature type="helix" evidence="17">
    <location>
        <begin position="903"/>
        <end position="905"/>
    </location>
</feature>
<feature type="strand" evidence="17">
    <location>
        <begin position="914"/>
        <end position="918"/>
    </location>
</feature>
<feature type="helix" evidence="17">
    <location>
        <begin position="922"/>
        <end position="935"/>
    </location>
</feature>
<feature type="turn" evidence="17">
    <location>
        <begin position="936"/>
        <end position="938"/>
    </location>
</feature>
<feature type="helix" evidence="17">
    <location>
        <begin position="944"/>
        <end position="956"/>
    </location>
</feature>
<feature type="helix" evidence="17">
    <location>
        <begin position="973"/>
        <end position="976"/>
    </location>
</feature>
<feature type="helix" evidence="17">
    <location>
        <begin position="983"/>
        <end position="994"/>
    </location>
</feature>
<feature type="helix" evidence="17">
    <location>
        <begin position="997"/>
        <end position="1002"/>
    </location>
</feature>
<feature type="helix" evidence="17">
    <location>
        <begin position="1004"/>
        <end position="1017"/>
    </location>
</feature>
<feature type="helix" evidence="17">
    <location>
        <begin position="1018"/>
        <end position="1020"/>
    </location>
</feature>
<feature type="helix" evidence="17">
    <location>
        <begin position="1024"/>
        <end position="1037"/>
    </location>
</feature>
<feature type="helix" evidence="17">
    <location>
        <begin position="1042"/>
        <end position="1051"/>
    </location>
</feature>
<feature type="strand" evidence="17">
    <location>
        <begin position="1054"/>
        <end position="1056"/>
    </location>
</feature>
<feature type="turn" evidence="17">
    <location>
        <begin position="1057"/>
        <end position="1060"/>
    </location>
</feature>
<feature type="strand" evidence="17">
    <location>
        <begin position="1061"/>
        <end position="1063"/>
    </location>
</feature>
<feature type="strand" evidence="17">
    <location>
        <begin position="1066"/>
        <end position="1068"/>
    </location>
</feature>
<feature type="helix" evidence="17">
    <location>
        <begin position="1069"/>
        <end position="1082"/>
    </location>
</feature>
<feature type="helix" evidence="17">
    <location>
        <begin position="1086"/>
        <end position="1097"/>
    </location>
</feature>
<feature type="helix" evidence="17">
    <location>
        <begin position="1109"/>
        <end position="1126"/>
    </location>
</feature>
<feature type="strand" evidence="17">
    <location>
        <begin position="1132"/>
        <end position="1139"/>
    </location>
</feature>
<feature type="strand" evidence="17">
    <location>
        <begin position="1142"/>
        <end position="1148"/>
    </location>
</feature>
<feature type="strand" evidence="17">
    <location>
        <begin position="1166"/>
        <end position="1185"/>
    </location>
</feature>
<feature type="strand" evidence="17">
    <location>
        <begin position="1193"/>
        <end position="1204"/>
    </location>
</feature>
<feature type="strand" evidence="17">
    <location>
        <begin position="1211"/>
        <end position="1220"/>
    </location>
</feature>
<feature type="strand" evidence="17">
    <location>
        <begin position="1230"/>
        <end position="1237"/>
    </location>
</feature>
<feature type="strand" evidence="17">
    <location>
        <begin position="1242"/>
        <end position="1251"/>
    </location>
</feature>
<feature type="strand" evidence="17">
    <location>
        <begin position="1254"/>
        <end position="1256"/>
    </location>
</feature>
<feature type="strand" evidence="17">
    <location>
        <begin position="1260"/>
        <end position="1264"/>
    </location>
</feature>
<feature type="turn" evidence="17">
    <location>
        <begin position="1265"/>
        <end position="1268"/>
    </location>
</feature>
<feature type="strand" evidence="17">
    <location>
        <begin position="1269"/>
        <end position="1275"/>
    </location>
</feature>
<feature type="strand" evidence="17">
    <location>
        <begin position="1282"/>
        <end position="1290"/>
    </location>
</feature>
<feature type="strand" evidence="17">
    <location>
        <begin position="1294"/>
        <end position="1296"/>
    </location>
</feature>
<feature type="strand" evidence="17">
    <location>
        <begin position="1300"/>
        <end position="1306"/>
    </location>
</feature>
<feature type="strand" evidence="17">
    <location>
        <begin position="1309"/>
        <end position="1318"/>
    </location>
</feature>
<feature type="helix" evidence="17">
    <location>
        <begin position="1325"/>
        <end position="1328"/>
    </location>
</feature>
<feature type="turn" evidence="17">
    <location>
        <begin position="1331"/>
        <end position="1333"/>
    </location>
</feature>
<accession>C9XI66</accession>
<protein>
    <recommendedName>
        <fullName evidence="12">Thioester-containing protein 1 allele R1</fullName>
        <shortName evidence="12">TEP1r</shortName>
    </recommendedName>
    <alternativeName>
        <fullName evidence="11">TEP1-F</fullName>
    </alternativeName>
    <component>
        <recommendedName>
            <fullName evidence="11">Thioester-containing protein 1 N-terminal</fullName>
            <shortName evidence="11">TEP1-N</shortName>
        </recommendedName>
    </component>
    <component>
        <recommendedName>
            <fullName evidence="11">Thioester-containing protein 1 C-terminal</fullName>
            <shortName evidence="11">TEP1-C</shortName>
        </recommendedName>
    </component>
</protein>
<organism evidence="14">
    <name type="scientific">Anopheles gambiae</name>
    <name type="common">African malaria mosquito</name>
    <dbReference type="NCBI Taxonomy" id="7165"/>
    <lineage>
        <taxon>Eukaryota</taxon>
        <taxon>Metazoa</taxon>
        <taxon>Ecdysozoa</taxon>
        <taxon>Arthropoda</taxon>
        <taxon>Hexapoda</taxon>
        <taxon>Insecta</taxon>
        <taxon>Pterygota</taxon>
        <taxon>Neoptera</taxon>
        <taxon>Endopterygota</taxon>
        <taxon>Diptera</taxon>
        <taxon>Nematocera</taxon>
        <taxon>Culicoidea</taxon>
        <taxon>Culicidae</taxon>
        <taxon>Anophelinae</taxon>
        <taxon>Anopheles</taxon>
    </lineage>
</organism>
<keyword id="KW-0002">3D-structure</keyword>
<keyword id="KW-1015">Disulfide bond</keyword>
<keyword id="KW-0325">Glycoprotein</keyword>
<keyword id="KW-0391">Immunity</keyword>
<keyword id="KW-1185">Reference proteome</keyword>
<keyword id="KW-0964">Secreted</keyword>
<keyword id="KW-0732">Signal</keyword>
<keyword id="KW-0882">Thioester bond</keyword>
<sequence length="1338" mass="151878">MWQFIRSRILTVIIFIGAAHGLLVVGPKFIRANQEYTLVISNFNSQLSKVDLLLKLEGETDNGLSVLNVTKMVDVRRNMNRMINFNMPEDLTAGNYKITIDGQRGFSFHKEAELVYLSKSISGLIQVDKPVFKPGDTVNFRVIVLDTELKPPARVKSVYVTIRDPQRNVIRKWSTAKLYAGVFESDLQIAPTPMLGVWNISVEVEGEELVSKTFEVKEYVLSTFDVQVMPSVIPLEEHQAVNLTIEANYHFGKPVQGVAKVELYLDDDKLKLKKELTVYGKGQVELRFDNFAMDADQQDVPVKVSFVEQYTNRTVVKQSQITVYRYAYRVELIKESPQFRPGLPFKCALQFTHHDGTPAKGISGKVEVSDVRFETTTTSDNDGLIKLELQPSEGTEQLSIHFNAVDGFFFYEDVNKVETVTDAYIKLELKSPIKRNKLMRFMVTCTERMTFFVYYVMSKGNIIDAGFMRPNKQPKYLLQLNATEKMIPRAKILIATVAGRTVVYDFADLDFQELRNNFDLSIDEQEIKPGRQIELSMSGRPGAYVGLAAYDKALLLFNKNHDLFWEDIGQVFDGFHAINENEFDIFHSLGLFARTLDDILFDSANEKTGRNALQSGKPIGKLVSYRTNFQESWLWKNVSIGRSGSRKLIEVVPDTTTSWYLTGFSIDPVYGLGIIKKPIQFTTVQPFYIVENLPYSIKRGEAVVLQFTLFNNLGAEYIADVTLYNVANQTEFVGRPNTDLSYTKSVSVPPKVGVPISFLIKARKLGEMAVRVKASIMLGHETDALEKVIRVMPESLVQPRMDTRFFCFDDHKNQTFPINLDINKKADSGSTKIEFRLNPNLLTTVIKNLDHLLGVPTGCGEQNMVKFVPNILVLDYLHAIGSKEQHLIDKATNLLRQGYQNQMRYRQTDGSFGLWETTNGSVFLTAFVGTSMQTAVKYISDIDAAMVEKALDWLASKQHFSGRFDKAGAEYHKEMQGGLRNGVALTSYVLMALLENDIAKAKHAEVIQKGMTYLSNQFGSINNAYDLSIATYAMMLNGHTMKEEALNKLIDMSFIDADKNERFWNTTNPIETTAYALLSFVMAEKYTDGIPVMNWLVNQRYVTGSFPSTQDTFVGLKALTKMAEKISPSRNDYTVQLKYKKSAKYFKINSEQIDVENFVDIPEDTKKLEINVGGIGFGLLEVVYQFNLNLVNFENRFQLDLEKQNTGSDYELRLKVCASYIPQLTDRRSNMALIEVTLPSGYVVDRNPISEQTKVNPIQKTEIRYGGTSVVLYYDNMGSERNCFTLTAYRRFKVALKRPAYVVVYDYYNTNLNAIKVYEVDKQNLCEICDEEDCPAEC</sequence>
<comment type="function">
    <text evidence="1 5 7 10">Plays an essential role in the innate immune response against bacteria, fungi and protozoa infection (PubMed:15006349). After proteolytic cleavage, the protein C-terminus binds covalently through a thioester bond to the pathogen surface resulting in pathogen clearance either by melanization or lysis (PubMed:15006349, PubMed:19286136). Initiate the recruitment and activation of a cascade of proteases, mostly of CLIP-domain serine proteases, which leads to the proteolytic cleavage of the prophenoloxidase (PPO) into active phenoloxidase (PO), the rate-limiting enzyme in melanin biosynthesis (By similarity). In response to parasite P.berghei-mediated infection, binds to and mediates killing of ookinetes, as they egress from midgut epithelial cells into the basal labyrinth, by both lysis and melanization (PubMed:15006349, PubMed:19286136). During bacterial infection, binds to both Gram-positive and Gram-negative bacteria but only promotes phagocytosis of Gram-negative bacteria (By similarity). Promotes the accumulation of SPCLIP1 onto the surface of P.berghei ookinetes and bacterium E.coli which leads to the melanization of the pathogen (By similarity). Recruits CLIPA2 to bacteria surface (By similarity). In response to bacterial infection, required for periostial hemocyte aggregation, but not for the aggregation of sessile hemocytes in non-periostial regions (By similarity). During the late stage of fungus B.bassiana-mediated infection, required for the initiation of hyphae melanization by binding to the surface of hyphae and recruiting prophenoloxidase PPO to them (By similarity). Plays a role in male fertility by binding to defective sperm cells and promoting their removal during spermatogenesis (PubMed:26394016).</text>
</comment>
<comment type="function">
    <molecule>Thioester-containing protein 1 allele R1</molecule>
    <text evidence="5">Binds to and mediates killing of parasite P.bergei ookinetes by lysis and melanization.</text>
</comment>
<comment type="function">
    <molecule>Thioester-containing protein 1 C-terminal</molecule>
    <text evidence="2">Binds covalently through a thioester bond to the pathogen surface resulting in pathogen clearance.</text>
</comment>
<comment type="subunit">
    <text evidence="1 7 9">Heterodimer of a TEP1-N chain and an TEP1-C chain non-covalently linked (PubMed:19286136, PubMed:23055931). Forms a complex composed of TEP1-N and TEP1-C heterodimer, LRIM1 and APL1C; the interaction stabilizes TEP1-N and TEP1-C heterodimer, prevents its binding to tissues while circulating in the hemolymph and protects the thioester bond from hydrolysis (PubMed:19286136, PubMed:23055931). Mature TEP1 and to a lesser extent full-length TEP1 interact with SPCLIP1; the interaction is induced by microbial infection (By similarity).</text>
</comment>
<comment type="subcellular location">
    <subcellularLocation>
        <location evidence="5 7">Secreted</location>
    </subcellularLocation>
    <text evidence="5 7">Secreted as a full-length protein into the hemolymph.</text>
</comment>
<comment type="induction">
    <text evidence="5">By parasite P.berghei infection; expression picks 24 hours post infection and increases again 4 days post infection.</text>
</comment>
<comment type="PTM">
    <text evidence="1 2 7 9">In the hemolymph, the full-length protein is cleaved by an unknow protease into a 75kDa N-terminal (TEP1-N) chain and an 80kDa C-terminal (TEP1-C) chain which remain non-covalently linked (PubMed:19286136, PubMed:23055931). The TEP1-C chain contains the thioester bond which covalently binds to the pathogen surface (PubMed:23055931). Cleavage is induced by bacterial infection or aseptic wound injury (By similarity). During embryonic and pupal development, the cleaved form is the predominant form (By similarity).</text>
</comment>
<comment type="PTM">
    <text evidence="2">N-glycosylated.</text>
</comment>
<comment type="polymorphism">
    <text evidence="5 8 9 10">TEP1 gene is highly polymorphic mainly in the region surrounding the thioester bond (PubMed:19797663). Two main alleles have been described, TEP1*S and TEP1*R (PubMed:19797663). After proteolytic cleavage, TEP1*S alleles are more susceptible to hydrolysis of the intramolecular thioester bond than TEP1*R alleles (PubMed:23055931). TEP1*S1 allele (AC Q9GYW4, strain PEST) or TEP1*S3 allele (AC C9XI63, strain G3) confer susceptibility to parasite P.berghei infection while TEP1*R1 allele (this entry, strain L3-5) confers resistance to P.berghei infection (PubMed:19797663). Approximately 20% of parasites survive in TEP1*S mosquitos and melanization of ookinetes is less efficient (PubMed:15006349, PubMed:19797663). In TEP1*S mosquitos, dead parasites are disposed by lysis, while in TEP1*R mosquitoes are killed both via lysis and melanization (PubMed:15006349). In TEP1*S2 male mosquitos, removal of defective sperm is more efficient resulting in enhanced male fertility (PubMed:26394016).</text>
</comment>
<comment type="disruption phenotype">
    <text evidence="5">In RNAi-mediated knockdown females infected with parasite P.berghei, causes an increase in the number of parasite oocysts in the midgut and a loss of ookinete melanization.</text>
</comment>
<dbReference type="EMBL" id="FN431785">
    <property type="protein sequence ID" value="CBA02654.1"/>
    <property type="molecule type" value="mRNA"/>
</dbReference>
<dbReference type="PDB" id="2PN5">
    <property type="method" value="X-ray"/>
    <property type="resolution" value="2.70 A"/>
    <property type="chains" value="A=22-1338"/>
</dbReference>
<dbReference type="PDB" id="4D94">
    <property type="method" value="X-ray"/>
    <property type="resolution" value="2.70 A"/>
    <property type="chains" value="A=22-1338"/>
</dbReference>
<dbReference type="PDBsum" id="2PN5"/>
<dbReference type="PDBsum" id="4D94"/>
<dbReference type="SMR" id="C9XI66"/>
<dbReference type="GlyCosmos" id="C9XI66">
    <property type="glycosylation" value="10 sites, No reported glycans"/>
</dbReference>
<dbReference type="iPTMnet" id="C9XI66"/>
<dbReference type="VEuPathDB" id="VectorBase:AGAMI1_007003"/>
<dbReference type="VEuPathDB" id="VectorBase:AGAP010815"/>
<dbReference type="HOGENOM" id="CLU_001634_5_3_1"/>
<dbReference type="InParanoid" id="C9XI66"/>
<dbReference type="EvolutionaryTrace" id="C9XI66"/>
<dbReference type="Proteomes" id="UP000007062">
    <property type="component" value="Unplaced"/>
</dbReference>
<dbReference type="GO" id="GO:0005615">
    <property type="term" value="C:extracellular space"/>
    <property type="evidence" value="ECO:0000314"/>
    <property type="project" value="UniProtKB"/>
</dbReference>
<dbReference type="GO" id="GO:0004866">
    <property type="term" value="F:endopeptidase inhibitor activity"/>
    <property type="evidence" value="ECO:0007669"/>
    <property type="project" value="InterPro"/>
</dbReference>
<dbReference type="GO" id="GO:0140546">
    <property type="term" value="P:defense response to symbiont"/>
    <property type="evidence" value="ECO:0000314"/>
    <property type="project" value="UniProtKB"/>
</dbReference>
<dbReference type="GO" id="GO:0002376">
    <property type="term" value="P:immune system process"/>
    <property type="evidence" value="ECO:0007669"/>
    <property type="project" value="UniProtKB-KW"/>
</dbReference>
<dbReference type="GO" id="GO:0048023">
    <property type="term" value="P:positive regulation of melanin biosynthetic process"/>
    <property type="evidence" value="ECO:0000314"/>
    <property type="project" value="UniProtKB"/>
</dbReference>
<dbReference type="CDD" id="cd02897">
    <property type="entry name" value="A2M_2"/>
    <property type="match status" value="1"/>
</dbReference>
<dbReference type="FunFam" id="2.60.40.1930:FF:000001">
    <property type="entry name" value="CD109 isoform 3"/>
    <property type="match status" value="1"/>
</dbReference>
<dbReference type="Gene3D" id="1.50.10.20">
    <property type="match status" value="1"/>
</dbReference>
<dbReference type="Gene3D" id="2.20.130.20">
    <property type="match status" value="2"/>
</dbReference>
<dbReference type="Gene3D" id="2.60.120.1540">
    <property type="match status" value="1"/>
</dbReference>
<dbReference type="Gene3D" id="2.60.40.1930">
    <property type="match status" value="2"/>
</dbReference>
<dbReference type="Gene3D" id="2.60.40.1940">
    <property type="match status" value="1"/>
</dbReference>
<dbReference type="Gene3D" id="2.60.40.2950">
    <property type="match status" value="1"/>
</dbReference>
<dbReference type="Gene3D" id="2.60.40.690">
    <property type="entry name" value="Alpha-macroglobulin, receptor-binding domain"/>
    <property type="match status" value="1"/>
</dbReference>
<dbReference type="Gene3D" id="2.60.40.10">
    <property type="entry name" value="Immunoglobulins"/>
    <property type="match status" value="2"/>
</dbReference>
<dbReference type="InterPro" id="IPR009048">
    <property type="entry name" value="A-macroglobulin_rcpt-bd"/>
</dbReference>
<dbReference type="InterPro" id="IPR036595">
    <property type="entry name" value="A-macroglobulin_rcpt-bd_sf"/>
</dbReference>
<dbReference type="InterPro" id="IPR050473">
    <property type="entry name" value="A2M/Complement_sys"/>
</dbReference>
<dbReference type="InterPro" id="IPR011625">
    <property type="entry name" value="A2M_N_BRD"/>
</dbReference>
<dbReference type="InterPro" id="IPR041813">
    <property type="entry name" value="A2M_TED"/>
</dbReference>
<dbReference type="InterPro" id="IPR047565">
    <property type="entry name" value="Alpha-macroglob_thiol-ester_cl"/>
</dbReference>
<dbReference type="InterPro" id="IPR011626">
    <property type="entry name" value="Alpha-macroglobulin_TED"/>
</dbReference>
<dbReference type="InterPro" id="IPR013783">
    <property type="entry name" value="Ig-like_fold"/>
</dbReference>
<dbReference type="InterPro" id="IPR001599">
    <property type="entry name" value="Macroglobln_a2"/>
</dbReference>
<dbReference type="InterPro" id="IPR019742">
    <property type="entry name" value="MacrogloblnA2_CS"/>
</dbReference>
<dbReference type="InterPro" id="IPR002890">
    <property type="entry name" value="MG2"/>
</dbReference>
<dbReference type="InterPro" id="IPR041555">
    <property type="entry name" value="MG3"/>
</dbReference>
<dbReference type="InterPro" id="IPR040839">
    <property type="entry name" value="MG4"/>
</dbReference>
<dbReference type="InterPro" id="IPR049135">
    <property type="entry name" value="TEP1_CUB2"/>
</dbReference>
<dbReference type="InterPro" id="IPR008930">
    <property type="entry name" value="Terpenoid_cyclase/PrenylTrfase"/>
</dbReference>
<dbReference type="PANTHER" id="PTHR11412:SF136">
    <property type="entry name" value="CD109 ANTIGEN"/>
    <property type="match status" value="1"/>
</dbReference>
<dbReference type="PANTHER" id="PTHR11412">
    <property type="entry name" value="MACROGLOBULIN / COMPLEMENT"/>
    <property type="match status" value="1"/>
</dbReference>
<dbReference type="Pfam" id="PF00207">
    <property type="entry name" value="A2M"/>
    <property type="match status" value="1"/>
</dbReference>
<dbReference type="Pfam" id="PF07703">
    <property type="entry name" value="A2M_BRD"/>
    <property type="match status" value="1"/>
</dbReference>
<dbReference type="Pfam" id="PF07677">
    <property type="entry name" value="A2M_recep"/>
    <property type="match status" value="1"/>
</dbReference>
<dbReference type="Pfam" id="PF01835">
    <property type="entry name" value="MG2"/>
    <property type="match status" value="1"/>
</dbReference>
<dbReference type="Pfam" id="PF17791">
    <property type="entry name" value="MG3"/>
    <property type="match status" value="1"/>
</dbReference>
<dbReference type="Pfam" id="PF17789">
    <property type="entry name" value="MG4"/>
    <property type="match status" value="1"/>
</dbReference>
<dbReference type="Pfam" id="PF07678">
    <property type="entry name" value="TED_complement"/>
    <property type="match status" value="1"/>
</dbReference>
<dbReference type="Pfam" id="PF21412">
    <property type="entry name" value="TEP1_CUB2"/>
    <property type="match status" value="1"/>
</dbReference>
<dbReference type="SFLD" id="SFLDG01179">
    <property type="entry name" value="Complement_C3/C4_Like"/>
    <property type="match status" value="1"/>
</dbReference>
<dbReference type="SMART" id="SM01360">
    <property type="entry name" value="A2M"/>
    <property type="match status" value="1"/>
</dbReference>
<dbReference type="SMART" id="SM01359">
    <property type="entry name" value="A2M_N_2"/>
    <property type="match status" value="1"/>
</dbReference>
<dbReference type="SMART" id="SM01361">
    <property type="entry name" value="A2M_recep"/>
    <property type="match status" value="1"/>
</dbReference>
<dbReference type="SMART" id="SM01419">
    <property type="entry name" value="Thiol-ester_cl"/>
    <property type="match status" value="1"/>
</dbReference>
<dbReference type="SUPFAM" id="SSF49410">
    <property type="entry name" value="Alpha-macroglobulin receptor domain"/>
    <property type="match status" value="1"/>
</dbReference>
<dbReference type="SUPFAM" id="SSF48239">
    <property type="entry name" value="Terpenoid cyclases/Protein prenyltransferases"/>
    <property type="match status" value="1"/>
</dbReference>
<dbReference type="PROSITE" id="PS00477">
    <property type="entry name" value="ALPHA_2_MACROGLOBULIN"/>
    <property type="match status" value="1"/>
</dbReference>
<reference evidence="14" key="1">
    <citation type="journal article" date="2009" name="Science">
        <title>Dissecting the genetic basis of resistance to malaria parasites in Anopheles gambiae.</title>
        <authorList>
            <person name="Blandin S.A."/>
            <person name="Wang-Sattler R."/>
            <person name="Lamacchia M."/>
            <person name="Gagneur J."/>
            <person name="Lycett G."/>
            <person name="Ning Y."/>
            <person name="Levashina E.A."/>
            <person name="Steinmetz L.M."/>
        </authorList>
    </citation>
    <scope>NUCLEOTIDE SEQUENCE [MRNA]</scope>
    <scope>NOMENCLATURE</scope>
    <scope>POLYMORPHISM</scope>
    <source>
        <strain evidence="14">L3-5</strain>
    </source>
</reference>
<reference evidence="13" key="2">
    <citation type="journal article" date="2004" name="Cell">
        <title>Complement-like protein TEP1 is a determinant of vectorial capacity in the malaria vector Anopheles gambiae.</title>
        <authorList>
            <person name="Blandin S."/>
            <person name="Shiao S.H."/>
            <person name="Moita L.F."/>
            <person name="Janse C.J."/>
            <person name="Waters A.P."/>
            <person name="Kafatos F.C."/>
            <person name="Levashina E.A."/>
        </authorList>
    </citation>
    <scope>FUNCTION</scope>
    <scope>SUBCELLULAR LOCATION</scope>
    <scope>POLYMORPHISM</scope>
    <scope>INDUCTION</scope>
    <scope>DISRUPTION PHENOTYPE</scope>
    <scope>PROTEOLYTIC CLEAVAGE</scope>
    <source>
        <strain evidence="5">L3-5</strain>
    </source>
</reference>
<reference evidence="13" key="3">
    <citation type="journal article" date="2009" name="Cell Host Microbe">
        <title>Two mosquito LRR proteins function as complement control factors in the TEP1-mediated killing of Plasmodium.</title>
        <authorList>
            <person name="Fraiture M."/>
            <person name="Baxter R.H."/>
            <person name="Steinert S."/>
            <person name="Chelliah Y."/>
            <person name="Frolet C."/>
            <person name="Quispe-Tintaya W."/>
            <person name="Hoffmann J.A."/>
            <person name="Blandin S.A."/>
            <person name="Levashina E.A."/>
        </authorList>
    </citation>
    <scope>FUNCTION</scope>
    <scope>SUBUNIT</scope>
    <scope>IDENTIFICATION IN A COMPLEX WITH LRIM1 AND APL1C</scope>
    <scope>SUBCELLULAR LOCATION</scope>
    <scope>PROTEOLYTIC CLEAVAGE</scope>
    <source>
        <strain evidence="7">L3-5</strain>
    </source>
</reference>
<reference evidence="13" key="4">
    <citation type="journal article" date="2015" name="PLoS Biol.">
        <title>A New Role of the Mosquito Complement-like Cascade in Male Fertility in Anopheles gambiae.</title>
        <authorList>
            <person name="Pompon J."/>
            <person name="Levashina E.A."/>
        </authorList>
    </citation>
    <scope>FUNCTION</scope>
    <scope>POLYMORPHISM</scope>
</reference>
<reference evidence="15" key="5">
    <citation type="journal article" date="2007" name="Proc. Natl. Acad. Sci. U.S.A.">
        <title>Structural basis for conserved complement factor-like function in the antimalarial protein TEP1.</title>
        <authorList>
            <person name="Baxter R.H."/>
            <person name="Chang C.I."/>
            <person name="Chelliah Y."/>
            <person name="Blandin S."/>
            <person name="Levashina E.A."/>
            <person name="Deisenhofer J."/>
        </authorList>
    </citation>
    <scope>X-RAY CRYSTALLOGRAPHY (2.70 ANGSTROMS) OF 22-1338</scope>
    <scope>GLYCOSYLATION AT ASN-199; ASN-242; ASN-312 AND ASN-637</scope>
    <scope>PROTEOLYTIC CLEAVAGE</scope>
    <scope>DISULFIDE BONDS</scope>
    <scope>THIOESTER BOND</scope>
</reference>
<reference evidence="16" key="6">
    <citation type="journal article" date="2012" name="PLoS Pathog.">
        <title>Molecular basis for genetic resistance of Anopheles gambiae to Plasmodium: structural analysis of TEP1 susceptible and resistant alleles.</title>
        <authorList>
            <person name="Le B.V."/>
            <person name="Williams M."/>
            <person name="Logarajah S."/>
            <person name="Baxter R.H."/>
        </authorList>
    </citation>
    <scope>X-RAY CRYSTALLOGRAPHY (2.70 ANGSTROMS) OF 22-1338</scope>
    <scope>IDENTIFICATION IN A COMPLEX WITH LRIM1 AND APL1C</scope>
    <scope>SUBUNIT</scope>
    <scope>PROTEOLYTIC CLEAVAGE</scope>
    <scope>POLYMORPHISM</scope>
    <scope>GLYCOSYLATION AT ASN-199; ASN-242; ASN-312; ASN-637 AND ASN-1065</scope>
    <scope>DISULFIDE BONDS</scope>
    <scope>THIOESTER BOND</scope>
    <scope>MUTAGENESIS OF ASN-312 AND CYS-859</scope>
</reference>